<evidence type="ECO:0000250" key="1"/>
<evidence type="ECO:0000305" key="2"/>
<proteinExistence type="inferred from homology"/>
<reference key="1">
    <citation type="journal article" date="1995" name="Science">
        <title>The minimal gene complement of Mycoplasma genitalium.</title>
        <authorList>
            <person name="Fraser C.M."/>
            <person name="Gocayne J.D."/>
            <person name="White O."/>
            <person name="Adams M.D."/>
            <person name="Clayton R.A."/>
            <person name="Fleischmann R.D."/>
            <person name="Bult C.J."/>
            <person name="Kerlavage A.R."/>
            <person name="Sutton G.G."/>
            <person name="Kelley J.M."/>
            <person name="Fritchman J.L."/>
            <person name="Weidman J.F."/>
            <person name="Small K.V."/>
            <person name="Sandusky M."/>
            <person name="Fuhrmann J.L."/>
            <person name="Nguyen D.T."/>
            <person name="Utterback T.R."/>
            <person name="Saudek D.M."/>
            <person name="Phillips C.A."/>
            <person name="Merrick J.M."/>
            <person name="Tomb J.-F."/>
            <person name="Dougherty B.A."/>
            <person name="Bott K.F."/>
            <person name="Hu P.-C."/>
            <person name="Lucier T.S."/>
            <person name="Peterson S.N."/>
            <person name="Smith H.O."/>
            <person name="Hutchison C.A. III"/>
            <person name="Venter J.C."/>
        </authorList>
    </citation>
    <scope>NUCLEOTIDE SEQUENCE [LARGE SCALE GENOMIC DNA]</scope>
    <source>
        <strain>ATCC 33530 / DSM 19775 / NCTC 10195 / G37</strain>
    </source>
</reference>
<comment type="function">
    <text evidence="1">Binds directly to 23S ribosomal RNA and is necessary for the in vitro assembly process of the 50S ribosomal subunit. It is not involved in the protein synthesizing functions of that subunit (By similarity).</text>
</comment>
<comment type="similarity">
    <text evidence="2">Belongs to the bacterial ribosomal protein bL20 family.</text>
</comment>
<protein>
    <recommendedName>
        <fullName evidence="2">Large ribosomal subunit protein bL20</fullName>
    </recommendedName>
    <alternativeName>
        <fullName>50S ribosomal protein L20</fullName>
    </alternativeName>
</protein>
<gene>
    <name type="primary">rplT</name>
    <name type="synonym">rpl20</name>
    <name type="ordered locus">MG198</name>
</gene>
<keyword id="KW-1185">Reference proteome</keyword>
<keyword id="KW-0687">Ribonucleoprotein</keyword>
<keyword id="KW-0689">Ribosomal protein</keyword>
<keyword id="KW-0694">RNA-binding</keyword>
<keyword id="KW-0699">rRNA-binding</keyword>
<dbReference type="EMBL" id="L43967">
    <property type="protein sequence ID" value="AAC71416.1"/>
    <property type="molecule type" value="Genomic_DNA"/>
</dbReference>
<dbReference type="PIR" id="H64221">
    <property type="entry name" value="H64221"/>
</dbReference>
<dbReference type="RefSeq" id="WP_009885739.1">
    <property type="nucleotide sequence ID" value="NC_000908.2"/>
</dbReference>
<dbReference type="SMR" id="P47440"/>
<dbReference type="FunCoup" id="P47440">
    <property type="interactions" value="210"/>
</dbReference>
<dbReference type="STRING" id="243273.MG_198"/>
<dbReference type="GeneID" id="88282330"/>
<dbReference type="KEGG" id="mge:MG_198"/>
<dbReference type="eggNOG" id="COG0292">
    <property type="taxonomic scope" value="Bacteria"/>
</dbReference>
<dbReference type="HOGENOM" id="CLU_123265_0_1_14"/>
<dbReference type="InParanoid" id="P47440"/>
<dbReference type="OrthoDB" id="9808966at2"/>
<dbReference type="BioCyc" id="MGEN243273:G1GJ2-230-MONOMER"/>
<dbReference type="Proteomes" id="UP000000807">
    <property type="component" value="Chromosome"/>
</dbReference>
<dbReference type="GO" id="GO:0022625">
    <property type="term" value="C:cytosolic large ribosomal subunit"/>
    <property type="evidence" value="ECO:0000318"/>
    <property type="project" value="GO_Central"/>
</dbReference>
<dbReference type="GO" id="GO:0019843">
    <property type="term" value="F:rRNA binding"/>
    <property type="evidence" value="ECO:0007669"/>
    <property type="project" value="UniProtKB-UniRule"/>
</dbReference>
<dbReference type="GO" id="GO:0003735">
    <property type="term" value="F:structural constituent of ribosome"/>
    <property type="evidence" value="ECO:0000318"/>
    <property type="project" value="GO_Central"/>
</dbReference>
<dbReference type="GO" id="GO:0000027">
    <property type="term" value="P:ribosomal large subunit assembly"/>
    <property type="evidence" value="ECO:0007669"/>
    <property type="project" value="UniProtKB-UniRule"/>
</dbReference>
<dbReference type="GO" id="GO:0006412">
    <property type="term" value="P:translation"/>
    <property type="evidence" value="ECO:0007669"/>
    <property type="project" value="InterPro"/>
</dbReference>
<dbReference type="CDD" id="cd07026">
    <property type="entry name" value="Ribosomal_L20"/>
    <property type="match status" value="1"/>
</dbReference>
<dbReference type="FunFam" id="1.10.1900.20:FF:000001">
    <property type="entry name" value="50S ribosomal protein L20"/>
    <property type="match status" value="1"/>
</dbReference>
<dbReference type="Gene3D" id="6.10.160.10">
    <property type="match status" value="1"/>
</dbReference>
<dbReference type="Gene3D" id="1.10.1900.20">
    <property type="entry name" value="Ribosomal protein L20"/>
    <property type="match status" value="1"/>
</dbReference>
<dbReference type="HAMAP" id="MF_00382">
    <property type="entry name" value="Ribosomal_bL20"/>
    <property type="match status" value="1"/>
</dbReference>
<dbReference type="InterPro" id="IPR005813">
    <property type="entry name" value="Ribosomal_bL20"/>
</dbReference>
<dbReference type="InterPro" id="IPR049946">
    <property type="entry name" value="RIBOSOMAL_L20_CS"/>
</dbReference>
<dbReference type="InterPro" id="IPR035566">
    <property type="entry name" value="Ribosomal_protein_bL20_C"/>
</dbReference>
<dbReference type="NCBIfam" id="TIGR01032">
    <property type="entry name" value="rplT_bact"/>
    <property type="match status" value="1"/>
</dbReference>
<dbReference type="PANTHER" id="PTHR10986">
    <property type="entry name" value="39S RIBOSOMAL PROTEIN L20"/>
    <property type="match status" value="1"/>
</dbReference>
<dbReference type="Pfam" id="PF00453">
    <property type="entry name" value="Ribosomal_L20"/>
    <property type="match status" value="1"/>
</dbReference>
<dbReference type="PRINTS" id="PR00062">
    <property type="entry name" value="RIBOSOMALL20"/>
</dbReference>
<dbReference type="SUPFAM" id="SSF74731">
    <property type="entry name" value="Ribosomal protein L20"/>
    <property type="match status" value="1"/>
</dbReference>
<dbReference type="PROSITE" id="PS00937">
    <property type="entry name" value="RIBOSOMAL_L20"/>
    <property type="match status" value="1"/>
</dbReference>
<organism>
    <name type="scientific">Mycoplasma genitalium (strain ATCC 33530 / DSM 19775 / NCTC 10195 / G37)</name>
    <name type="common">Mycoplasmoides genitalium</name>
    <dbReference type="NCBI Taxonomy" id="243273"/>
    <lineage>
        <taxon>Bacteria</taxon>
        <taxon>Bacillati</taxon>
        <taxon>Mycoplasmatota</taxon>
        <taxon>Mycoplasmoidales</taxon>
        <taxon>Mycoplasmoidaceae</taxon>
        <taxon>Mycoplasmoides</taxon>
    </lineage>
</organism>
<accession>P47440</accession>
<name>RL20_MYCGE</name>
<sequence length="124" mass="14361">MRVKGTNTTRIRRKKWLKQASGSFGTRKASFKAAKQTVIQASKYAYRDRRQKKREFRSLWILRLNAALRAQGMTYSVFINELKKAKIVINRKVLSELAIKEPNKLNLIINTIKKPTNKPTVAKT</sequence>
<feature type="chain" id="PRO_0000177181" description="Large ribosomal subunit protein bL20">
    <location>
        <begin position="1"/>
        <end position="124"/>
    </location>
</feature>